<feature type="chain" id="PRO_0000454155" description="Isopentenyl-diphosphate delta-isomerase idi1">
    <location>
        <begin position="1"/>
        <end position="279"/>
    </location>
</feature>
<feature type="domain" description="Nudix hydrolase" evidence="4">
    <location>
        <begin position="91"/>
        <end position="249"/>
    </location>
</feature>
<feature type="short sequence motif" description="Nudix box" evidence="4">
    <location>
        <begin position="129"/>
        <end position="162"/>
    </location>
</feature>
<feature type="active site" evidence="1">
    <location>
        <position position="128"/>
    </location>
</feature>
<feature type="active site" evidence="1">
    <location>
        <position position="193"/>
    </location>
</feature>
<feature type="binding site" evidence="2">
    <location>
        <position position="78"/>
    </location>
    <ligand>
        <name>substrate</name>
    </ligand>
</feature>
<feature type="binding site" evidence="3">
    <location>
        <position position="82"/>
    </location>
    <ligand>
        <name>Mg(2+)</name>
        <dbReference type="ChEBI" id="CHEBI:18420"/>
    </ligand>
</feature>
<feature type="binding site" evidence="3">
    <location>
        <position position="93"/>
    </location>
    <ligand>
        <name>Mg(2+)</name>
        <dbReference type="ChEBI" id="CHEBI:18420"/>
    </ligand>
</feature>
<feature type="binding site" evidence="2">
    <location>
        <position position="111"/>
    </location>
    <ligand>
        <name>substrate</name>
    </ligand>
</feature>
<feature type="binding site" evidence="2">
    <location>
        <position position="116"/>
    </location>
    <ligand>
        <name>substrate</name>
    </ligand>
</feature>
<feature type="binding site" evidence="2">
    <location>
        <position position="129"/>
    </location>
    <ligand>
        <name>substrate</name>
    </ligand>
</feature>
<feature type="binding site" evidence="3">
    <location>
        <position position="191"/>
    </location>
    <ligand>
        <name>Mg(2+)</name>
        <dbReference type="ChEBI" id="CHEBI:18420"/>
    </ligand>
</feature>
<feature type="binding site" evidence="3">
    <location>
        <position position="193"/>
    </location>
    <ligand>
        <name>Mg(2+)</name>
        <dbReference type="ChEBI" id="CHEBI:18420"/>
    </ligand>
</feature>
<gene>
    <name evidence="6" type="primary">idi1</name>
    <name type="ORF">AFUA_6G11160</name>
</gene>
<evidence type="ECO:0000250" key="1">
    <source>
        <dbReference type="UniProtKB" id="P15496"/>
    </source>
</evidence>
<evidence type="ECO:0000250" key="2">
    <source>
        <dbReference type="UniProtKB" id="Q13907"/>
    </source>
</evidence>
<evidence type="ECO:0000250" key="3">
    <source>
        <dbReference type="UniProtKB" id="Q46822"/>
    </source>
</evidence>
<evidence type="ECO:0000255" key="4">
    <source>
        <dbReference type="PROSITE-ProRule" id="PRU00794"/>
    </source>
</evidence>
<evidence type="ECO:0000269" key="5">
    <source>
    </source>
</evidence>
<evidence type="ECO:0000303" key="6">
    <source>
    </source>
</evidence>
<evidence type="ECO:0000305" key="7"/>
<evidence type="ECO:0000305" key="8">
    <source>
    </source>
</evidence>
<evidence type="ECO:0000305" key="9">
    <source>
    </source>
</evidence>
<reference key="1">
    <citation type="journal article" date="2005" name="Nature">
        <title>Genomic sequence of the pathogenic and allergenic filamentous fungus Aspergillus fumigatus.</title>
        <authorList>
            <person name="Nierman W.C."/>
            <person name="Pain A."/>
            <person name="Anderson M.J."/>
            <person name="Wortman J.R."/>
            <person name="Kim H.S."/>
            <person name="Arroyo J."/>
            <person name="Berriman M."/>
            <person name="Abe K."/>
            <person name="Archer D.B."/>
            <person name="Bermejo C."/>
            <person name="Bennett J.W."/>
            <person name="Bowyer P."/>
            <person name="Chen D."/>
            <person name="Collins M."/>
            <person name="Coulsen R."/>
            <person name="Davies R."/>
            <person name="Dyer P.S."/>
            <person name="Farman M.L."/>
            <person name="Fedorova N."/>
            <person name="Fedorova N.D."/>
            <person name="Feldblyum T.V."/>
            <person name="Fischer R."/>
            <person name="Fosker N."/>
            <person name="Fraser A."/>
            <person name="Garcia J.L."/>
            <person name="Garcia M.J."/>
            <person name="Goble A."/>
            <person name="Goldman G.H."/>
            <person name="Gomi K."/>
            <person name="Griffith-Jones S."/>
            <person name="Gwilliam R."/>
            <person name="Haas B.J."/>
            <person name="Haas H."/>
            <person name="Harris D.E."/>
            <person name="Horiuchi H."/>
            <person name="Huang J."/>
            <person name="Humphray S."/>
            <person name="Jimenez J."/>
            <person name="Keller N."/>
            <person name="Khouri H."/>
            <person name="Kitamoto K."/>
            <person name="Kobayashi T."/>
            <person name="Konzack S."/>
            <person name="Kulkarni R."/>
            <person name="Kumagai T."/>
            <person name="Lafton A."/>
            <person name="Latge J.-P."/>
            <person name="Li W."/>
            <person name="Lord A."/>
            <person name="Lu C."/>
            <person name="Majoros W.H."/>
            <person name="May G.S."/>
            <person name="Miller B.L."/>
            <person name="Mohamoud Y."/>
            <person name="Molina M."/>
            <person name="Monod M."/>
            <person name="Mouyna I."/>
            <person name="Mulligan S."/>
            <person name="Murphy L.D."/>
            <person name="O'Neil S."/>
            <person name="Paulsen I."/>
            <person name="Penalva M.A."/>
            <person name="Pertea M."/>
            <person name="Price C."/>
            <person name="Pritchard B.L."/>
            <person name="Quail M.A."/>
            <person name="Rabbinowitsch E."/>
            <person name="Rawlins N."/>
            <person name="Rajandream M.A."/>
            <person name="Reichard U."/>
            <person name="Renauld H."/>
            <person name="Robson G.D."/>
            <person name="Rodriguez de Cordoba S."/>
            <person name="Rodriguez-Pena J.M."/>
            <person name="Ronning C.M."/>
            <person name="Rutter S."/>
            <person name="Salzberg S.L."/>
            <person name="Sanchez M."/>
            <person name="Sanchez-Ferrero J.C."/>
            <person name="Saunders D."/>
            <person name="Seeger K."/>
            <person name="Squares R."/>
            <person name="Squares S."/>
            <person name="Takeuchi M."/>
            <person name="Tekaia F."/>
            <person name="Turner G."/>
            <person name="Vazquez de Aldana C.R."/>
            <person name="Weidman J."/>
            <person name="White O."/>
            <person name="Woodward J.R."/>
            <person name="Yu J.-H."/>
            <person name="Fraser C.M."/>
            <person name="Galagan J.E."/>
            <person name="Asai K."/>
            <person name="Machida M."/>
            <person name="Hall N."/>
            <person name="Barrell B.G."/>
            <person name="Denning D.W."/>
        </authorList>
    </citation>
    <scope>NUCLEOTIDE SEQUENCE [LARGE SCALE GENOMIC DNA]</scope>
    <source>
        <strain>ATCC MYA-4609 / CBS 101355 / FGSC A1100 / Af293</strain>
    </source>
</reference>
<reference key="2">
    <citation type="journal article" date="2005" name="Med. Mycol.">
        <title>The ergosterol biosynthesis pathway, transporter genes, and azole resistance in Aspergillus fumigatus.</title>
        <authorList>
            <person name="Ferreira M.E."/>
            <person name="Colombo A.L."/>
            <person name="Paulsen I."/>
            <person name="Ren Q."/>
            <person name="Wortman J."/>
            <person name="Huang J."/>
            <person name="Goldman M.H."/>
            <person name="Goldman G.H."/>
        </authorList>
    </citation>
    <scope>IDENTIFICATION</scope>
    <scope>FUNCTION</scope>
</reference>
<reference key="3">
    <citation type="journal article" date="2012" name="Proc. Natl. Acad. Sci. U.S.A.">
        <title>Mevalonate governs interdependency of ergosterol and siderophore biosyntheses in the fungal pathogen Aspergillus fumigatus.</title>
        <authorList>
            <person name="Yasmin S."/>
            <person name="Alcazar-Fuoli L."/>
            <person name="Gruendlinger M."/>
            <person name="Puempel T."/>
            <person name="Cairns T."/>
            <person name="Blatzer M."/>
            <person name="Lopez J.F."/>
            <person name="Grimalt J.O."/>
            <person name="Bignell E."/>
            <person name="Haas H."/>
        </authorList>
    </citation>
    <scope>FUNCTION</scope>
</reference>
<name>IDI1_ASPFU</name>
<proteinExistence type="inferred from homology"/>
<sequence length="279" mass="31591">MTSTATVTVPPRITAENVATLFPEVDTSLAREVFPSTVEGSAKDSEELAGYDEEQVRLMDEVCIVLDDDDKPIGSASKKACHLMTNIDRGLLHRAFSVFLFDSNNRLLLQQRASEKITFPDMWTNTCCSHPLGIPGETGAELDAAVLGVKRAAQRKLDQELGIKAEQVPLEKFEFFTRIHYKAPSDGKWGEHETVTDTQILVDYILFIQADVDLNVNPNEVRDTKYVSAQELKQMFTQPGLKFTPWFKLICNSMLFEWWSYLGTADLDKYKGEKEIRRM</sequence>
<protein>
    <recommendedName>
        <fullName evidence="9">Isopentenyl-diphosphate delta-isomerase idi1</fullName>
        <ecNumber evidence="5">5.3.3.2</ecNumber>
    </recommendedName>
    <alternativeName>
        <fullName evidence="6">Ergosterol biosynthesis protein idi1</fullName>
    </alternativeName>
    <alternativeName>
        <fullName evidence="9">Isopentenyl pyrophosphate isomerase idi1</fullName>
        <shortName evidence="9">IPP isomerase</shortName>
    </alternativeName>
</protein>
<dbReference type="EC" id="5.3.3.2" evidence="5"/>
<dbReference type="EMBL" id="AAHF01000006">
    <property type="protein sequence ID" value="EAL88962.1"/>
    <property type="molecule type" value="Genomic_DNA"/>
</dbReference>
<dbReference type="RefSeq" id="XP_751000.1">
    <property type="nucleotide sequence ID" value="XM_745907.1"/>
</dbReference>
<dbReference type="SMR" id="Q4WM52"/>
<dbReference type="FunCoup" id="Q4WM52">
    <property type="interactions" value="779"/>
</dbReference>
<dbReference type="STRING" id="330879.Q4WM52"/>
<dbReference type="EnsemblFungi" id="EAL88962">
    <property type="protein sequence ID" value="EAL88962"/>
    <property type="gene ID" value="AFUA_6G11160"/>
</dbReference>
<dbReference type="GeneID" id="3508305"/>
<dbReference type="KEGG" id="afm:AFUA_6G11160"/>
<dbReference type="VEuPathDB" id="FungiDB:Afu6g11160"/>
<dbReference type="eggNOG" id="KOG0142">
    <property type="taxonomic scope" value="Eukaryota"/>
</dbReference>
<dbReference type="HOGENOM" id="CLU_060552_0_2_1"/>
<dbReference type="InParanoid" id="Q4WM52"/>
<dbReference type="OMA" id="KAPFDNG"/>
<dbReference type="OrthoDB" id="510307at2759"/>
<dbReference type="UniPathway" id="UPA00059">
    <property type="reaction ID" value="UER00104"/>
</dbReference>
<dbReference type="Proteomes" id="UP000002530">
    <property type="component" value="Chromosome 6"/>
</dbReference>
<dbReference type="GO" id="GO:0005737">
    <property type="term" value="C:cytoplasm"/>
    <property type="evidence" value="ECO:0000318"/>
    <property type="project" value="GO_Central"/>
</dbReference>
<dbReference type="GO" id="GO:0004452">
    <property type="term" value="F:isopentenyl-diphosphate delta-isomerase activity"/>
    <property type="evidence" value="ECO:0000318"/>
    <property type="project" value="GO_Central"/>
</dbReference>
<dbReference type="GO" id="GO:0046872">
    <property type="term" value="F:metal ion binding"/>
    <property type="evidence" value="ECO:0007669"/>
    <property type="project" value="UniProtKB-KW"/>
</dbReference>
<dbReference type="GO" id="GO:0050992">
    <property type="term" value="P:dimethylallyl diphosphate biosynthetic process"/>
    <property type="evidence" value="ECO:0007669"/>
    <property type="project" value="UniProtKB-UniPathway"/>
</dbReference>
<dbReference type="GO" id="GO:0009240">
    <property type="term" value="P:isopentenyl diphosphate biosynthetic process"/>
    <property type="evidence" value="ECO:0000318"/>
    <property type="project" value="GO_Central"/>
</dbReference>
<dbReference type="GO" id="GO:0016126">
    <property type="term" value="P:sterol biosynthetic process"/>
    <property type="evidence" value="ECO:0007669"/>
    <property type="project" value="UniProtKB-KW"/>
</dbReference>
<dbReference type="CDD" id="cd02885">
    <property type="entry name" value="NUDIX_IPP_Isomerase"/>
    <property type="match status" value="1"/>
</dbReference>
<dbReference type="FunFam" id="3.90.79.10:FF:000012">
    <property type="entry name" value="Isopentenyl-diphosphate Delta-isomerase 1"/>
    <property type="match status" value="1"/>
</dbReference>
<dbReference type="Gene3D" id="3.90.79.10">
    <property type="entry name" value="Nucleoside Triphosphate Pyrophosphohydrolase"/>
    <property type="match status" value="1"/>
</dbReference>
<dbReference type="InterPro" id="IPR011876">
    <property type="entry name" value="IsopentenylPP_isomerase_typ1"/>
</dbReference>
<dbReference type="InterPro" id="IPR015797">
    <property type="entry name" value="NUDIX_hydrolase-like_dom_sf"/>
</dbReference>
<dbReference type="InterPro" id="IPR000086">
    <property type="entry name" value="NUDIX_hydrolase_dom"/>
</dbReference>
<dbReference type="NCBIfam" id="TIGR02150">
    <property type="entry name" value="IPP_isom_1"/>
    <property type="match status" value="1"/>
</dbReference>
<dbReference type="PANTHER" id="PTHR10885">
    <property type="entry name" value="ISOPENTENYL-DIPHOSPHATE DELTA-ISOMERASE"/>
    <property type="match status" value="1"/>
</dbReference>
<dbReference type="PANTHER" id="PTHR10885:SF0">
    <property type="entry name" value="ISOPENTENYL-DIPHOSPHATE DELTA-ISOMERASE"/>
    <property type="match status" value="1"/>
</dbReference>
<dbReference type="Pfam" id="PF00293">
    <property type="entry name" value="NUDIX"/>
    <property type="match status" value="1"/>
</dbReference>
<dbReference type="SUPFAM" id="SSF55811">
    <property type="entry name" value="Nudix"/>
    <property type="match status" value="1"/>
</dbReference>
<dbReference type="PROSITE" id="PS51462">
    <property type="entry name" value="NUDIX"/>
    <property type="match status" value="1"/>
</dbReference>
<comment type="function">
    <text evidence="1 8 9">Isopentenyl-diphosphate delta-isomerase; part of the second module of ergosterol biosynthesis pathway that includes the middle steps of the pathway (By similarity). Idi1 catalyzes the 1,3-allylic rearrangement of isopentenyl (IPP) to its highly electrophilic allylic isomer, dimethylallyl diphosphate (DMAPP) (By similarity). The second module is carried out in the vacuole and involves the formation of farnesyl diphosphate, which is also an important intermediate in the biosynthesis of ubiquinone, dolichol, heme and prenylated proteins. Activity by the mevalonate kinase erg12 (AFUA_4G07780) first converts mevalonate into 5-phosphomevalonate. 5-phosphomevalonate is then further converted to 5-diphosphomevalonate by the phosphomevalonate kinase erg8 (AFUA_5G10680). The diphosphomevalonate decarboxylase mvd1 (AFUA_4G07130) then produces isopentenyl diphosphate. The isopentenyl-diphosphate delta-isomerase idi1 (AFUA_6G11160) then catalyzes the 1,3-allylic rearrangement of the homoallylic substrate isopentenyl (IPP) to its highly electrophilic allylic isomer, dimethylallyl diphosphate (DMAPP). Finally the farnesyl diphosphate synthase erg20 (AFUA_5G02450) catalyzes the sequential condensation of isopentenyl pyrophosphate with dimethylallyl pyrophosphate, and then with the resultant geranylpyrophosphate to the ultimate product farnesyl pyrophosphate (Probable) (PubMed:16110826, PubMed:22106303).</text>
</comment>
<comment type="catalytic activity">
    <reaction evidence="8">
        <text>isopentenyl diphosphate = dimethylallyl diphosphate</text>
        <dbReference type="Rhea" id="RHEA:23284"/>
        <dbReference type="ChEBI" id="CHEBI:57623"/>
        <dbReference type="ChEBI" id="CHEBI:128769"/>
        <dbReference type="EC" id="5.3.3.2"/>
    </reaction>
    <physiologicalReaction direction="left-to-right" evidence="8">
        <dbReference type="Rhea" id="RHEA:23285"/>
    </physiologicalReaction>
</comment>
<comment type="cofactor">
    <cofactor evidence="8">
        <name>Mg(2+)</name>
        <dbReference type="ChEBI" id="CHEBI:18420"/>
    </cofactor>
    <text evidence="3">Binds 1 Mg(2+) ion per subunit.</text>
</comment>
<comment type="pathway">
    <text evidence="8">Isoprenoid biosynthesis; dimethylallyl diphosphate biosynthesis; dimethylallyl diphosphate from isopentenyl diphosphate: step 1/1.</text>
</comment>
<comment type="similarity">
    <text evidence="7">Belongs to the IPP isomerase type 1 family.</text>
</comment>
<keyword id="KW-0413">Isomerase</keyword>
<keyword id="KW-0414">Isoprene biosynthesis</keyword>
<keyword id="KW-0444">Lipid biosynthesis</keyword>
<keyword id="KW-0443">Lipid metabolism</keyword>
<keyword id="KW-0460">Magnesium</keyword>
<keyword id="KW-0479">Metal-binding</keyword>
<keyword id="KW-1185">Reference proteome</keyword>
<keyword id="KW-0752">Steroid biosynthesis</keyword>
<keyword id="KW-0753">Steroid metabolism</keyword>
<keyword id="KW-0756">Sterol biosynthesis</keyword>
<keyword id="KW-1207">Sterol metabolism</keyword>
<accession>Q4WM52</accession>
<organism>
    <name type="scientific">Aspergillus fumigatus (strain ATCC MYA-4609 / CBS 101355 / FGSC A1100 / Af293)</name>
    <name type="common">Neosartorya fumigata</name>
    <dbReference type="NCBI Taxonomy" id="330879"/>
    <lineage>
        <taxon>Eukaryota</taxon>
        <taxon>Fungi</taxon>
        <taxon>Dikarya</taxon>
        <taxon>Ascomycota</taxon>
        <taxon>Pezizomycotina</taxon>
        <taxon>Eurotiomycetes</taxon>
        <taxon>Eurotiomycetidae</taxon>
        <taxon>Eurotiales</taxon>
        <taxon>Aspergillaceae</taxon>
        <taxon>Aspergillus</taxon>
        <taxon>Aspergillus subgen. Fumigati</taxon>
    </lineage>
</organism>